<proteinExistence type="inferred from homology"/>
<protein>
    <recommendedName>
        <fullName evidence="1">Galactose-1-phosphate uridylyltransferase</fullName>
        <shortName evidence="1">Gal-1-P uridylyltransferase</shortName>
        <ecNumber evidence="1">2.7.7.12</ecNumber>
    </recommendedName>
    <alternativeName>
        <fullName evidence="1">UDP-glucose--hexose-1-phosphate uridylyltransferase</fullName>
    </alternativeName>
</protein>
<reference key="1">
    <citation type="journal article" date="2006" name="Genome Res.">
        <title>Skewed genomic variability in strains of the toxigenic bacterial pathogen, Clostridium perfringens.</title>
        <authorList>
            <person name="Myers G.S.A."/>
            <person name="Rasko D.A."/>
            <person name="Cheung J.K."/>
            <person name="Ravel J."/>
            <person name="Seshadri R."/>
            <person name="DeBoy R.T."/>
            <person name="Ren Q."/>
            <person name="Varga J."/>
            <person name="Awad M.M."/>
            <person name="Brinkac L.M."/>
            <person name="Daugherty S.C."/>
            <person name="Haft D.H."/>
            <person name="Dodson R.J."/>
            <person name="Madupu R."/>
            <person name="Nelson W.C."/>
            <person name="Rosovitz M.J."/>
            <person name="Sullivan S.A."/>
            <person name="Khouri H."/>
            <person name="Dimitrov G.I."/>
            <person name="Watkins K.L."/>
            <person name="Mulligan S."/>
            <person name="Benton J."/>
            <person name="Radune D."/>
            <person name="Fisher D.J."/>
            <person name="Atkins H.S."/>
            <person name="Hiscox T."/>
            <person name="Jost B.H."/>
            <person name="Billington S.J."/>
            <person name="Songer J.G."/>
            <person name="McClane B.A."/>
            <person name="Titball R.W."/>
            <person name="Rood J.I."/>
            <person name="Melville S.B."/>
            <person name="Paulsen I.T."/>
        </authorList>
    </citation>
    <scope>NUCLEOTIDE SEQUENCE [LARGE SCALE GENOMIC DNA]</scope>
    <source>
        <strain>SM101 / Type A</strain>
    </source>
</reference>
<name>GALT_CLOPS</name>
<evidence type="ECO:0000255" key="1">
    <source>
        <dbReference type="HAMAP-Rule" id="MF_00571"/>
    </source>
</evidence>
<dbReference type="EC" id="2.7.7.12" evidence="1"/>
<dbReference type="EMBL" id="CP000312">
    <property type="protein sequence ID" value="ABG85543.1"/>
    <property type="molecule type" value="Genomic_DNA"/>
</dbReference>
<dbReference type="RefSeq" id="WP_011592323.1">
    <property type="nucleotide sequence ID" value="NC_008262.1"/>
</dbReference>
<dbReference type="KEGG" id="cpr:CPR_1346"/>
<dbReference type="UniPathway" id="UPA00214"/>
<dbReference type="Proteomes" id="UP000001824">
    <property type="component" value="Chromosome"/>
</dbReference>
<dbReference type="GO" id="GO:0005737">
    <property type="term" value="C:cytoplasm"/>
    <property type="evidence" value="ECO:0007669"/>
    <property type="project" value="UniProtKB-SubCell"/>
</dbReference>
<dbReference type="GO" id="GO:0008108">
    <property type="term" value="F:UDP-glucose:hexose-1-phosphate uridylyltransferase activity"/>
    <property type="evidence" value="ECO:0007669"/>
    <property type="project" value="UniProtKB-UniRule"/>
</dbReference>
<dbReference type="GO" id="GO:0006012">
    <property type="term" value="P:galactose metabolic process"/>
    <property type="evidence" value="ECO:0007669"/>
    <property type="project" value="UniProtKB-UniRule"/>
</dbReference>
<dbReference type="HAMAP" id="MF_00571">
    <property type="entry name" value="GalP_UDP_trans"/>
    <property type="match status" value="1"/>
</dbReference>
<dbReference type="InterPro" id="IPR000766">
    <property type="entry name" value="GalP_uridyl_Trfase_II"/>
</dbReference>
<dbReference type="InterPro" id="IPR023425">
    <property type="entry name" value="GalP_uridyl_Trfase_II_CS"/>
</dbReference>
<dbReference type="InterPro" id="IPR005850">
    <property type="entry name" value="GalP_Utransf_C"/>
</dbReference>
<dbReference type="InterPro" id="IPR005849">
    <property type="entry name" value="GalP_Utransf_N"/>
</dbReference>
<dbReference type="NCBIfam" id="NF003629">
    <property type="entry name" value="PRK05270.1-2"/>
    <property type="match status" value="1"/>
</dbReference>
<dbReference type="PANTHER" id="PTHR39191:SF1">
    <property type="entry name" value="DUF4922 DOMAIN-CONTAINING PROTEIN"/>
    <property type="match status" value="1"/>
</dbReference>
<dbReference type="PANTHER" id="PTHR39191">
    <property type="entry name" value="GALACTOSE-1-PHOSPHATE URIDYLYLTRANSFERASE"/>
    <property type="match status" value="1"/>
</dbReference>
<dbReference type="Pfam" id="PF02744">
    <property type="entry name" value="GalP_UDP_tr_C"/>
    <property type="match status" value="1"/>
</dbReference>
<dbReference type="Pfam" id="PF01087">
    <property type="entry name" value="GalP_UDP_transf"/>
    <property type="match status" value="1"/>
</dbReference>
<dbReference type="PIRSF" id="PIRSF006005">
    <property type="entry name" value="GalT_BS"/>
    <property type="match status" value="1"/>
</dbReference>
<dbReference type="PROSITE" id="PS01163">
    <property type="entry name" value="GAL_P_UDP_TRANSF_II"/>
    <property type="match status" value="1"/>
</dbReference>
<comment type="catalytic activity">
    <reaction evidence="1">
        <text>alpha-D-galactose 1-phosphate + UDP-alpha-D-glucose = alpha-D-glucose 1-phosphate + UDP-alpha-D-galactose</text>
        <dbReference type="Rhea" id="RHEA:13989"/>
        <dbReference type="ChEBI" id="CHEBI:58336"/>
        <dbReference type="ChEBI" id="CHEBI:58601"/>
        <dbReference type="ChEBI" id="CHEBI:58885"/>
        <dbReference type="ChEBI" id="CHEBI:66914"/>
        <dbReference type="EC" id="2.7.7.12"/>
    </reaction>
</comment>
<comment type="pathway">
    <text evidence="1">Carbohydrate metabolism; galactose metabolism.</text>
</comment>
<comment type="subcellular location">
    <subcellularLocation>
        <location evidence="1">Cytoplasm</location>
    </subcellularLocation>
</comment>
<comment type="similarity">
    <text evidence="1">Belongs to the galactose-1-phosphate uridylyltransferase type 2 family.</text>
</comment>
<feature type="chain" id="PRO_1000025022" description="Galactose-1-phosphate uridylyltransferase">
    <location>
        <begin position="1"/>
        <end position="498"/>
    </location>
</feature>
<sequence length="498" mass="57898">MYNLNALIDRLIEISKNNNLIEDMDTVYTRNRLLSIFNENSYTPCEEKLTLSFHETLNELINIAIEKKIIENALYSKDIFSSDIMNIFLPTPSLINKEFYKRYAISPKESTDYFYSLSKSSNYIRTDRIAKNINFKAPSKYGTMDITINLSKPEKDPKEIALARNSVKSNYPKCLLCIENEGYEGTVTHPDRANHRMIRLSLNDRTWMLQYSPYLYYNEHCIILSEDHVPMKIDISTFKNLLSFVDKFPHYFAGSNADLPIVGGSILSHEHYQGGNHRFPMNDAKKLFDFSIDGFEDVECEAIKWPISTIRLRGENIDSLVLASDLILKKWRDYSDETLDILSYSNSEMHNTITPMVRKEDGKFVVDLSLRNNRTSKEHPLGIFHPHEEVHHIKKENIGLIEVMGLAVLPGRLLKELEKIKEYLRDEISLDNIEEYHRPWALELKKKFDYLKSATDLNDFVNKELSNKFVSVLEHCGVFKLNEEGLEGFKRFTNSLNN</sequence>
<organism>
    <name type="scientific">Clostridium perfringens (strain SM101 / Type A)</name>
    <dbReference type="NCBI Taxonomy" id="289380"/>
    <lineage>
        <taxon>Bacteria</taxon>
        <taxon>Bacillati</taxon>
        <taxon>Bacillota</taxon>
        <taxon>Clostridia</taxon>
        <taxon>Eubacteriales</taxon>
        <taxon>Clostridiaceae</taxon>
        <taxon>Clostridium</taxon>
    </lineage>
</organism>
<keyword id="KW-0119">Carbohydrate metabolism</keyword>
<keyword id="KW-0963">Cytoplasm</keyword>
<keyword id="KW-0299">Galactose metabolism</keyword>
<keyword id="KW-0548">Nucleotidyltransferase</keyword>
<keyword id="KW-0808">Transferase</keyword>
<gene>
    <name evidence="1" type="primary">galT</name>
    <name type="ordered locus">CPR_1346</name>
</gene>
<accession>Q0ST91</accession>